<evidence type="ECO:0000305" key="1"/>
<reference key="1">
    <citation type="journal article" date="2000" name="Nature">
        <title>Sequence and analysis of chromosome 1 of the plant Arabidopsis thaliana.</title>
        <authorList>
            <person name="Theologis A."/>
            <person name="Ecker J.R."/>
            <person name="Palm C.J."/>
            <person name="Federspiel N.A."/>
            <person name="Kaul S."/>
            <person name="White O."/>
            <person name="Alonso J."/>
            <person name="Altafi H."/>
            <person name="Araujo R."/>
            <person name="Bowman C.L."/>
            <person name="Brooks S.Y."/>
            <person name="Buehler E."/>
            <person name="Chan A."/>
            <person name="Chao Q."/>
            <person name="Chen H."/>
            <person name="Cheuk R.F."/>
            <person name="Chin C.W."/>
            <person name="Chung M.K."/>
            <person name="Conn L."/>
            <person name="Conway A.B."/>
            <person name="Conway A.R."/>
            <person name="Creasy T.H."/>
            <person name="Dewar K."/>
            <person name="Dunn P."/>
            <person name="Etgu P."/>
            <person name="Feldblyum T.V."/>
            <person name="Feng J.-D."/>
            <person name="Fong B."/>
            <person name="Fujii C.Y."/>
            <person name="Gill J.E."/>
            <person name="Goldsmith A.D."/>
            <person name="Haas B."/>
            <person name="Hansen N.F."/>
            <person name="Hughes B."/>
            <person name="Huizar L."/>
            <person name="Hunter J.L."/>
            <person name="Jenkins J."/>
            <person name="Johnson-Hopson C."/>
            <person name="Khan S."/>
            <person name="Khaykin E."/>
            <person name="Kim C.J."/>
            <person name="Koo H.L."/>
            <person name="Kremenetskaia I."/>
            <person name="Kurtz D.B."/>
            <person name="Kwan A."/>
            <person name="Lam B."/>
            <person name="Langin-Hooper S."/>
            <person name="Lee A."/>
            <person name="Lee J.M."/>
            <person name="Lenz C.A."/>
            <person name="Li J.H."/>
            <person name="Li Y.-P."/>
            <person name="Lin X."/>
            <person name="Liu S.X."/>
            <person name="Liu Z.A."/>
            <person name="Luros J.S."/>
            <person name="Maiti R."/>
            <person name="Marziali A."/>
            <person name="Militscher J."/>
            <person name="Miranda M."/>
            <person name="Nguyen M."/>
            <person name="Nierman W.C."/>
            <person name="Osborne B.I."/>
            <person name="Pai G."/>
            <person name="Peterson J."/>
            <person name="Pham P.K."/>
            <person name="Rizzo M."/>
            <person name="Rooney T."/>
            <person name="Rowley D."/>
            <person name="Sakano H."/>
            <person name="Salzberg S.L."/>
            <person name="Schwartz J.R."/>
            <person name="Shinn P."/>
            <person name="Southwick A.M."/>
            <person name="Sun H."/>
            <person name="Tallon L.J."/>
            <person name="Tambunga G."/>
            <person name="Toriumi M.J."/>
            <person name="Town C.D."/>
            <person name="Utterback T."/>
            <person name="Van Aken S."/>
            <person name="Vaysberg M."/>
            <person name="Vysotskaia V.S."/>
            <person name="Walker M."/>
            <person name="Wu D."/>
            <person name="Yu G."/>
            <person name="Fraser C.M."/>
            <person name="Venter J.C."/>
            <person name="Davis R.W."/>
        </authorList>
    </citation>
    <scope>NUCLEOTIDE SEQUENCE [LARGE SCALE GENOMIC DNA]</scope>
    <source>
        <strain>cv. Columbia</strain>
    </source>
</reference>
<reference key="2">
    <citation type="journal article" date="2017" name="Plant J.">
        <title>Araport11: a complete reannotation of the Arabidopsis thaliana reference genome.</title>
        <authorList>
            <person name="Cheng C.Y."/>
            <person name="Krishnakumar V."/>
            <person name="Chan A.P."/>
            <person name="Thibaud-Nissen F."/>
            <person name="Schobel S."/>
            <person name="Town C.D."/>
        </authorList>
    </citation>
    <scope>GENOME REANNOTATION</scope>
    <source>
        <strain>cv. Columbia</strain>
    </source>
</reference>
<reference key="3">
    <citation type="journal article" date="2004" name="Plant Cell">
        <title>Genome-wide analysis of Arabidopsis pentatricopeptide repeat proteins reveals their essential role in organelle biogenesis.</title>
        <authorList>
            <person name="Lurin C."/>
            <person name="Andres C."/>
            <person name="Aubourg S."/>
            <person name="Bellaoui M."/>
            <person name="Bitton F."/>
            <person name="Bruyere C."/>
            <person name="Caboche M."/>
            <person name="Debast C."/>
            <person name="Gualberto J."/>
            <person name="Hoffmann B."/>
            <person name="Lecharny A."/>
            <person name="Le Ret M."/>
            <person name="Martin-Magniette M.-L."/>
            <person name="Mireau H."/>
            <person name="Peeters N."/>
            <person name="Renou J.-P."/>
            <person name="Szurek B."/>
            <person name="Taconnat L."/>
            <person name="Small I."/>
        </authorList>
    </citation>
    <scope>GENE FAMILY</scope>
</reference>
<feature type="chain" id="PRO_0000342874" description="Pentatricopeptide repeat-containing protein At1g79540">
    <location>
        <begin position="1"/>
        <end position="780"/>
    </location>
</feature>
<feature type="repeat" description="PPR 1">
    <location>
        <begin position="91"/>
        <end position="125"/>
    </location>
</feature>
<feature type="repeat" description="PPR 2">
    <location>
        <begin position="126"/>
        <end position="160"/>
    </location>
</feature>
<feature type="repeat" description="PPR 3">
    <location>
        <begin position="161"/>
        <end position="196"/>
    </location>
</feature>
<feature type="repeat" description="PPR 4">
    <location>
        <begin position="197"/>
        <end position="231"/>
    </location>
</feature>
<feature type="repeat" description="PPR 5">
    <location>
        <begin position="232"/>
        <end position="266"/>
    </location>
</feature>
<feature type="repeat" description="PPR 6">
    <location>
        <begin position="267"/>
        <end position="301"/>
    </location>
</feature>
<feature type="repeat" description="PPR 7">
    <location>
        <begin position="302"/>
        <end position="336"/>
    </location>
</feature>
<feature type="repeat" description="PPR 8">
    <location>
        <begin position="337"/>
        <end position="371"/>
    </location>
</feature>
<feature type="repeat" description="PPR 9">
    <location>
        <begin position="372"/>
        <end position="406"/>
    </location>
</feature>
<feature type="repeat" description="PPR 10">
    <location>
        <begin position="407"/>
        <end position="441"/>
    </location>
</feature>
<feature type="repeat" description="PPR 11">
    <location>
        <begin position="442"/>
        <end position="476"/>
    </location>
</feature>
<feature type="repeat" description="PPR 12">
    <location>
        <begin position="481"/>
        <end position="515"/>
    </location>
</feature>
<feature type="repeat" description="PPR 13">
    <location>
        <begin position="516"/>
        <end position="550"/>
    </location>
</feature>
<feature type="repeat" description="PPR 14">
    <location>
        <begin position="551"/>
        <end position="585"/>
    </location>
</feature>
<feature type="repeat" description="PPR 15">
    <location>
        <begin position="653"/>
        <end position="687"/>
    </location>
</feature>
<feature type="repeat" description="PPR 16">
    <location>
        <begin position="688"/>
        <end position="722"/>
    </location>
</feature>
<feature type="repeat" description="PPR 17">
    <location>
        <begin position="723"/>
        <end position="758"/>
    </location>
</feature>
<sequence>MKPQMFFRSVIQFYSKPSWMQRSYSSGNAEFNISGEVISILAKKKPIEPALEPLVPFLSKNIITSVIKDEVNRQLGFRFFIWASRRERLRSRESFGLVIDMLSEDNGCDLYWQTLEELKSGGVSVDSYCFCVLISAYAKMGMAEKAVESFGRMKEFDCRPDVFTYNVILRVMMREEVFFMLAFAVYNEMLKCNCSPNLYTFGILMDGLYKKGRTSDAQKMFDDMTGRGISPNRVTYTILISGLCQRGSADDARKLFYEMQTSGNYPDSVAHNALLDGFCKLGRMVEAFELLRLFEKDGFVLGLRGYSSLIDGLFRARRYTQAFELYANMLKKNIKPDIILYTILIQGLSKAGKIEDALKLLSSMPSKGISPDTYCYNAVIKALCGRGLLEEGRSLQLEMSETESFPDACTHTILICSMCRNGLVREAEEIFTEIEKSGCSPSVATFNALIDGLCKSGELKEARLLLHKMEVGRPASLFLRLSHSGNRSFDTMVESGSILKAYRDLAHFADTGSSPDIVSYNVLINGFCRAGDIDGALKLLNVLQLKGLSPDSVTYNTLINGLHRVGREEEAFKLFYAKDDFRHSPAVYRSLMTWSCRKRKVLVAFNLWMKYLKKISCLDDETANEIEQCFKEGETERALRRLIELDTRKDELTLGPYTIWLIGLCQSGRFHEALMVFSVLREKKILVTPPSCVKLIHGLCKREQLDAAIEVFLYTLDNNFKLMPRVCNYLLSSLLESTEKMEIVSQLTNRMERAGYNVDSMLRFEILKYHRHRKQVLIDL</sequence>
<gene>
    <name type="ordered locus">At1g79540</name>
    <name type="ORF">T8K14.4</name>
</gene>
<organism>
    <name type="scientific">Arabidopsis thaliana</name>
    <name type="common">Mouse-ear cress</name>
    <dbReference type="NCBI Taxonomy" id="3702"/>
    <lineage>
        <taxon>Eukaryota</taxon>
        <taxon>Viridiplantae</taxon>
        <taxon>Streptophyta</taxon>
        <taxon>Embryophyta</taxon>
        <taxon>Tracheophyta</taxon>
        <taxon>Spermatophyta</taxon>
        <taxon>Magnoliopsida</taxon>
        <taxon>eudicotyledons</taxon>
        <taxon>Gunneridae</taxon>
        <taxon>Pentapetalae</taxon>
        <taxon>rosids</taxon>
        <taxon>malvids</taxon>
        <taxon>Brassicales</taxon>
        <taxon>Brassicaceae</taxon>
        <taxon>Camelineae</taxon>
        <taxon>Arabidopsis</taxon>
    </lineage>
</organism>
<name>PP133_ARATH</name>
<accession>Q9SAJ5</accession>
<keyword id="KW-1185">Reference proteome</keyword>
<keyword id="KW-0677">Repeat</keyword>
<comment type="similarity">
    <text evidence="1">Belongs to the PPR family. P subfamily.</text>
</comment>
<comment type="online information" name="Pentatricopeptide repeat proteins">
    <link uri="https://ppr.plantenergy.uwa.edu.au"/>
</comment>
<dbReference type="EMBL" id="AC007202">
    <property type="protein sequence ID" value="AAD30222.1"/>
    <property type="molecule type" value="Genomic_DNA"/>
</dbReference>
<dbReference type="EMBL" id="CP002684">
    <property type="protein sequence ID" value="AEE36261.1"/>
    <property type="molecule type" value="Genomic_DNA"/>
</dbReference>
<dbReference type="PIR" id="G96826">
    <property type="entry name" value="G96826"/>
</dbReference>
<dbReference type="RefSeq" id="NP_178072.1">
    <property type="nucleotide sequence ID" value="NM_106602.3"/>
</dbReference>
<dbReference type="SMR" id="Q9SAJ5"/>
<dbReference type="FunCoup" id="Q9SAJ5">
    <property type="interactions" value="1146"/>
</dbReference>
<dbReference type="PaxDb" id="3702-AT1G79540.1"/>
<dbReference type="ProteomicsDB" id="249409"/>
<dbReference type="EnsemblPlants" id="AT1G79540.1">
    <property type="protein sequence ID" value="AT1G79540.1"/>
    <property type="gene ID" value="AT1G79540"/>
</dbReference>
<dbReference type="GeneID" id="844292"/>
<dbReference type="Gramene" id="AT1G79540.1">
    <property type="protein sequence ID" value="AT1G79540.1"/>
    <property type="gene ID" value="AT1G79540"/>
</dbReference>
<dbReference type="KEGG" id="ath:AT1G79540"/>
<dbReference type="Araport" id="AT1G79540"/>
<dbReference type="TAIR" id="AT1G79540"/>
<dbReference type="eggNOG" id="KOG4197">
    <property type="taxonomic scope" value="Eukaryota"/>
</dbReference>
<dbReference type="HOGENOM" id="CLU_002706_49_2_1"/>
<dbReference type="InParanoid" id="Q9SAJ5"/>
<dbReference type="OMA" id="SMCQSGQ"/>
<dbReference type="PhylomeDB" id="Q9SAJ5"/>
<dbReference type="PRO" id="PR:Q9SAJ5"/>
<dbReference type="Proteomes" id="UP000006548">
    <property type="component" value="Chromosome 1"/>
</dbReference>
<dbReference type="ExpressionAtlas" id="Q9SAJ5">
    <property type="expression patterns" value="baseline and differential"/>
</dbReference>
<dbReference type="GO" id="GO:0003729">
    <property type="term" value="F:mRNA binding"/>
    <property type="evidence" value="ECO:0000314"/>
    <property type="project" value="TAIR"/>
</dbReference>
<dbReference type="Gene3D" id="1.25.40.10">
    <property type="entry name" value="Tetratricopeptide repeat domain"/>
    <property type="match status" value="6"/>
</dbReference>
<dbReference type="InterPro" id="IPR002885">
    <property type="entry name" value="Pentatricopeptide_rpt"/>
</dbReference>
<dbReference type="InterPro" id="IPR050872">
    <property type="entry name" value="PPR_P_subfamily"/>
</dbReference>
<dbReference type="InterPro" id="IPR011990">
    <property type="entry name" value="TPR-like_helical_dom_sf"/>
</dbReference>
<dbReference type="NCBIfam" id="TIGR00756">
    <property type="entry name" value="PPR"/>
    <property type="match status" value="13"/>
</dbReference>
<dbReference type="PANTHER" id="PTHR46128">
    <property type="entry name" value="MITOCHONDRIAL GROUP I INTRON SPLICING FACTOR CCM1"/>
    <property type="match status" value="1"/>
</dbReference>
<dbReference type="PANTHER" id="PTHR46128:SF51">
    <property type="entry name" value="PENTACOTRIPEPTIDE-REPEAT REGION OF PRORP DOMAIN-CONTAINING PROTEIN"/>
    <property type="match status" value="1"/>
</dbReference>
<dbReference type="Pfam" id="PF01535">
    <property type="entry name" value="PPR"/>
    <property type="match status" value="3"/>
</dbReference>
<dbReference type="Pfam" id="PF12854">
    <property type="entry name" value="PPR_1"/>
    <property type="match status" value="1"/>
</dbReference>
<dbReference type="Pfam" id="PF13041">
    <property type="entry name" value="PPR_2"/>
    <property type="match status" value="4"/>
</dbReference>
<dbReference type="Pfam" id="PF13812">
    <property type="entry name" value="PPR_3"/>
    <property type="match status" value="1"/>
</dbReference>
<dbReference type="PROSITE" id="PS51375">
    <property type="entry name" value="PPR"/>
    <property type="match status" value="16"/>
</dbReference>
<protein>
    <recommendedName>
        <fullName>Pentatricopeptide repeat-containing protein At1g79540</fullName>
    </recommendedName>
</protein>
<proteinExistence type="evidence at transcript level"/>